<gene>
    <name evidence="20" type="primary">ATG14</name>
    <name evidence="22" type="synonym">ATG14L</name>
    <name type="synonym">KIAA0831</name>
</gene>
<protein>
    <recommendedName>
        <fullName evidence="21">Beclin 1-associated autophagy-related key regulator</fullName>
        <shortName evidence="21">Barkor</shortName>
    </recommendedName>
    <alternativeName>
        <fullName evidence="22">Autophagy-related protein 14-like protein</fullName>
        <shortName evidence="22">Atg14L</shortName>
    </alternativeName>
</protein>
<organism>
    <name type="scientific">Homo sapiens</name>
    <name type="common">Human</name>
    <dbReference type="NCBI Taxonomy" id="9606"/>
    <lineage>
        <taxon>Eukaryota</taxon>
        <taxon>Metazoa</taxon>
        <taxon>Chordata</taxon>
        <taxon>Craniata</taxon>
        <taxon>Vertebrata</taxon>
        <taxon>Euteleostomi</taxon>
        <taxon>Mammalia</taxon>
        <taxon>Eutheria</taxon>
        <taxon>Euarchontoglires</taxon>
        <taxon>Primates</taxon>
        <taxon>Haplorrhini</taxon>
        <taxon>Catarrhini</taxon>
        <taxon>Hominidae</taxon>
        <taxon>Homo</taxon>
    </lineage>
</organism>
<reference key="1">
    <citation type="journal article" date="1998" name="DNA Res.">
        <title>Prediction of the coding sequences of unidentified human genes. XII. The complete sequences of 100 new cDNA clones from brain which code for large proteins in vitro.</title>
        <authorList>
            <person name="Nagase T."/>
            <person name="Ishikawa K."/>
            <person name="Suyama M."/>
            <person name="Kikuno R."/>
            <person name="Hirosawa M."/>
            <person name="Miyajima N."/>
            <person name="Tanaka A."/>
            <person name="Kotani H."/>
            <person name="Nomura N."/>
            <person name="Ohara O."/>
        </authorList>
    </citation>
    <scope>NUCLEOTIDE SEQUENCE [LARGE SCALE MRNA] (ISOFORM 2)</scope>
    <source>
        <tissue>Brain</tissue>
    </source>
</reference>
<reference key="2">
    <citation type="journal article" date="2004" name="Nat. Genet.">
        <title>Complete sequencing and characterization of 21,243 full-length human cDNAs.</title>
        <authorList>
            <person name="Ota T."/>
            <person name="Suzuki Y."/>
            <person name="Nishikawa T."/>
            <person name="Otsuki T."/>
            <person name="Sugiyama T."/>
            <person name="Irie R."/>
            <person name="Wakamatsu A."/>
            <person name="Hayashi K."/>
            <person name="Sato H."/>
            <person name="Nagai K."/>
            <person name="Kimura K."/>
            <person name="Makita H."/>
            <person name="Sekine M."/>
            <person name="Obayashi M."/>
            <person name="Nishi T."/>
            <person name="Shibahara T."/>
            <person name="Tanaka T."/>
            <person name="Ishii S."/>
            <person name="Yamamoto J."/>
            <person name="Saito K."/>
            <person name="Kawai Y."/>
            <person name="Isono Y."/>
            <person name="Nakamura Y."/>
            <person name="Nagahari K."/>
            <person name="Murakami K."/>
            <person name="Yasuda T."/>
            <person name="Iwayanagi T."/>
            <person name="Wagatsuma M."/>
            <person name="Shiratori A."/>
            <person name="Sudo H."/>
            <person name="Hosoiri T."/>
            <person name="Kaku Y."/>
            <person name="Kodaira H."/>
            <person name="Kondo H."/>
            <person name="Sugawara M."/>
            <person name="Takahashi M."/>
            <person name="Kanda K."/>
            <person name="Yokoi T."/>
            <person name="Furuya T."/>
            <person name="Kikkawa E."/>
            <person name="Omura Y."/>
            <person name="Abe K."/>
            <person name="Kamihara K."/>
            <person name="Katsuta N."/>
            <person name="Sato K."/>
            <person name="Tanikawa M."/>
            <person name="Yamazaki M."/>
            <person name="Ninomiya K."/>
            <person name="Ishibashi T."/>
            <person name="Yamashita H."/>
            <person name="Murakawa K."/>
            <person name="Fujimori K."/>
            <person name="Tanai H."/>
            <person name="Kimata M."/>
            <person name="Watanabe M."/>
            <person name="Hiraoka S."/>
            <person name="Chiba Y."/>
            <person name="Ishida S."/>
            <person name="Ono Y."/>
            <person name="Takiguchi S."/>
            <person name="Watanabe S."/>
            <person name="Yosida M."/>
            <person name="Hotuta T."/>
            <person name="Kusano J."/>
            <person name="Kanehori K."/>
            <person name="Takahashi-Fujii A."/>
            <person name="Hara H."/>
            <person name="Tanase T.-O."/>
            <person name="Nomura Y."/>
            <person name="Togiya S."/>
            <person name="Komai F."/>
            <person name="Hara R."/>
            <person name="Takeuchi K."/>
            <person name="Arita M."/>
            <person name="Imose N."/>
            <person name="Musashino K."/>
            <person name="Yuuki H."/>
            <person name="Oshima A."/>
            <person name="Sasaki N."/>
            <person name="Aotsuka S."/>
            <person name="Yoshikawa Y."/>
            <person name="Matsunawa H."/>
            <person name="Ichihara T."/>
            <person name="Shiohata N."/>
            <person name="Sano S."/>
            <person name="Moriya S."/>
            <person name="Momiyama H."/>
            <person name="Satoh N."/>
            <person name="Takami S."/>
            <person name="Terashima Y."/>
            <person name="Suzuki O."/>
            <person name="Nakagawa S."/>
            <person name="Senoh A."/>
            <person name="Mizoguchi H."/>
            <person name="Goto Y."/>
            <person name="Shimizu F."/>
            <person name="Wakebe H."/>
            <person name="Hishigaki H."/>
            <person name="Watanabe T."/>
            <person name="Sugiyama A."/>
            <person name="Takemoto M."/>
            <person name="Kawakami B."/>
            <person name="Yamazaki M."/>
            <person name="Watanabe K."/>
            <person name="Kumagai A."/>
            <person name="Itakura S."/>
            <person name="Fukuzumi Y."/>
            <person name="Fujimori Y."/>
            <person name="Komiyama M."/>
            <person name="Tashiro H."/>
            <person name="Tanigami A."/>
            <person name="Fujiwara T."/>
            <person name="Ono T."/>
            <person name="Yamada K."/>
            <person name="Fujii Y."/>
            <person name="Ozaki K."/>
            <person name="Hirao M."/>
            <person name="Ohmori Y."/>
            <person name="Kawabata A."/>
            <person name="Hikiji T."/>
            <person name="Kobatake N."/>
            <person name="Inagaki H."/>
            <person name="Ikema Y."/>
            <person name="Okamoto S."/>
            <person name="Okitani R."/>
            <person name="Kawakami T."/>
            <person name="Noguchi S."/>
            <person name="Itoh T."/>
            <person name="Shigeta K."/>
            <person name="Senba T."/>
            <person name="Matsumura K."/>
            <person name="Nakajima Y."/>
            <person name="Mizuno T."/>
            <person name="Morinaga M."/>
            <person name="Sasaki M."/>
            <person name="Togashi T."/>
            <person name="Oyama M."/>
            <person name="Hata H."/>
            <person name="Watanabe M."/>
            <person name="Komatsu T."/>
            <person name="Mizushima-Sugano J."/>
            <person name="Satoh T."/>
            <person name="Shirai Y."/>
            <person name="Takahashi Y."/>
            <person name="Nakagawa K."/>
            <person name="Okumura K."/>
            <person name="Nagase T."/>
            <person name="Nomura N."/>
            <person name="Kikuchi H."/>
            <person name="Masuho Y."/>
            <person name="Yamashita R."/>
            <person name="Nakai K."/>
            <person name="Yada T."/>
            <person name="Nakamura Y."/>
            <person name="Ohara O."/>
            <person name="Isogai T."/>
            <person name="Sugano S."/>
        </authorList>
    </citation>
    <scope>NUCLEOTIDE SEQUENCE [LARGE SCALE MRNA] (ISOFORM 1)</scope>
    <source>
        <tissue>Hippocampus</tissue>
        <tissue>Trachea</tissue>
    </source>
</reference>
<reference key="3">
    <citation type="journal article" date="2003" name="Nature">
        <title>The DNA sequence and analysis of human chromosome 14.</title>
        <authorList>
            <person name="Heilig R."/>
            <person name="Eckenberg R."/>
            <person name="Petit J.-L."/>
            <person name="Fonknechten N."/>
            <person name="Da Silva C."/>
            <person name="Cattolico L."/>
            <person name="Levy M."/>
            <person name="Barbe V."/>
            <person name="De Berardinis V."/>
            <person name="Ureta-Vidal A."/>
            <person name="Pelletier E."/>
            <person name="Vico V."/>
            <person name="Anthouard V."/>
            <person name="Rowen L."/>
            <person name="Madan A."/>
            <person name="Qin S."/>
            <person name="Sun H."/>
            <person name="Du H."/>
            <person name="Pepin K."/>
            <person name="Artiguenave F."/>
            <person name="Robert C."/>
            <person name="Cruaud C."/>
            <person name="Bruels T."/>
            <person name="Jaillon O."/>
            <person name="Friedlander L."/>
            <person name="Samson G."/>
            <person name="Brottier P."/>
            <person name="Cure S."/>
            <person name="Segurens B."/>
            <person name="Aniere F."/>
            <person name="Samain S."/>
            <person name="Crespeau H."/>
            <person name="Abbasi N."/>
            <person name="Aiach N."/>
            <person name="Boscus D."/>
            <person name="Dickhoff R."/>
            <person name="Dors M."/>
            <person name="Dubois I."/>
            <person name="Friedman C."/>
            <person name="Gouyvenoux M."/>
            <person name="James R."/>
            <person name="Madan A."/>
            <person name="Mairey-Estrada B."/>
            <person name="Mangenot S."/>
            <person name="Martins N."/>
            <person name="Menard M."/>
            <person name="Oztas S."/>
            <person name="Ratcliffe A."/>
            <person name="Shaffer T."/>
            <person name="Trask B."/>
            <person name="Vacherie B."/>
            <person name="Bellemere C."/>
            <person name="Belser C."/>
            <person name="Besnard-Gonnet M."/>
            <person name="Bartol-Mavel D."/>
            <person name="Boutard M."/>
            <person name="Briez-Silla S."/>
            <person name="Combette S."/>
            <person name="Dufosse-Laurent V."/>
            <person name="Ferron C."/>
            <person name="Lechaplais C."/>
            <person name="Louesse C."/>
            <person name="Muselet D."/>
            <person name="Magdelenat G."/>
            <person name="Pateau E."/>
            <person name="Petit E."/>
            <person name="Sirvain-Trukniewicz P."/>
            <person name="Trybou A."/>
            <person name="Vega-Czarny N."/>
            <person name="Bataille E."/>
            <person name="Bluet E."/>
            <person name="Bordelais I."/>
            <person name="Dubois M."/>
            <person name="Dumont C."/>
            <person name="Guerin T."/>
            <person name="Haffray S."/>
            <person name="Hammadi R."/>
            <person name="Muanga J."/>
            <person name="Pellouin V."/>
            <person name="Robert D."/>
            <person name="Wunderle E."/>
            <person name="Gauguet G."/>
            <person name="Roy A."/>
            <person name="Sainte-Marthe L."/>
            <person name="Verdier J."/>
            <person name="Verdier-Discala C."/>
            <person name="Hillier L.W."/>
            <person name="Fulton L."/>
            <person name="McPherson J."/>
            <person name="Matsuda F."/>
            <person name="Wilson R."/>
            <person name="Scarpelli C."/>
            <person name="Gyapay G."/>
            <person name="Wincker P."/>
            <person name="Saurin W."/>
            <person name="Quetier F."/>
            <person name="Waterston R."/>
            <person name="Hood L."/>
            <person name="Weissenbach J."/>
        </authorList>
    </citation>
    <scope>NUCLEOTIDE SEQUENCE [LARGE SCALE GENOMIC DNA]</scope>
</reference>
<reference key="4">
    <citation type="submission" date="2005-07" db="EMBL/GenBank/DDBJ databases">
        <authorList>
            <person name="Mural R.J."/>
            <person name="Istrail S."/>
            <person name="Sutton G.G."/>
            <person name="Florea L."/>
            <person name="Halpern A.L."/>
            <person name="Mobarry C.M."/>
            <person name="Lippert R."/>
            <person name="Walenz B."/>
            <person name="Shatkay H."/>
            <person name="Dew I."/>
            <person name="Miller J.R."/>
            <person name="Flanigan M.J."/>
            <person name="Edwards N.J."/>
            <person name="Bolanos R."/>
            <person name="Fasulo D."/>
            <person name="Halldorsson B.V."/>
            <person name="Hannenhalli S."/>
            <person name="Turner R."/>
            <person name="Yooseph S."/>
            <person name="Lu F."/>
            <person name="Nusskern D.R."/>
            <person name="Shue B.C."/>
            <person name="Zheng X.H."/>
            <person name="Zhong F."/>
            <person name="Delcher A.L."/>
            <person name="Huson D.H."/>
            <person name="Kravitz S.A."/>
            <person name="Mouchard L."/>
            <person name="Reinert K."/>
            <person name="Remington K.A."/>
            <person name="Clark A.G."/>
            <person name="Waterman M.S."/>
            <person name="Eichler E.E."/>
            <person name="Adams M.D."/>
            <person name="Hunkapiller M.W."/>
            <person name="Myers E.W."/>
            <person name="Venter J.C."/>
        </authorList>
    </citation>
    <scope>NUCLEOTIDE SEQUENCE [LARGE SCALE GENOMIC DNA]</scope>
</reference>
<reference key="5">
    <citation type="journal article" date="2004" name="Genome Res.">
        <title>The status, quality, and expansion of the NIH full-length cDNA project: the Mammalian Gene Collection (MGC).</title>
        <authorList>
            <consortium name="The MGC Project Team"/>
        </authorList>
    </citation>
    <scope>NUCLEOTIDE SEQUENCE [LARGE SCALE MRNA] (ISOFORM 1)</scope>
</reference>
<reference key="6">
    <citation type="journal article" date="2008" name="Mol. Biol. Cell">
        <title>Beclin 1 forms two distinct phosphatidylinositol 3-kinase complexes with mammalian Atg14 and UVRAG.</title>
        <authorList>
            <person name="Itakura E."/>
            <person name="Kishi C."/>
            <person name="Inoue K."/>
            <person name="Mizushima N."/>
        </authorList>
    </citation>
    <scope>IDENTIFICATION</scope>
    <scope>FUNCTION</scope>
    <scope>INTERACTION WITH BECN1; PIK3C3 AND PIK3R4</scope>
    <scope>SUBCELLULAR LOCATION</scope>
</reference>
<reference key="7">
    <citation type="journal article" date="2006" name="Cell">
        <title>Global, in vivo, and site-specific phosphorylation dynamics in signaling networks.</title>
        <authorList>
            <person name="Olsen J.V."/>
            <person name="Blagoev B."/>
            <person name="Gnad F."/>
            <person name="Macek B."/>
            <person name="Kumar C."/>
            <person name="Mortensen P."/>
            <person name="Mann M."/>
        </authorList>
    </citation>
    <scope>PHOSPHORYLATION [LARGE SCALE ANALYSIS] AT SER-29</scope>
    <scope>IDENTIFICATION BY MASS SPECTROMETRY [LARGE SCALE ANALYSIS]</scope>
    <source>
        <tissue>Cervix carcinoma</tissue>
    </source>
</reference>
<reference key="8">
    <citation type="journal article" date="2008" name="Proc. Natl. Acad. Sci. U.S.A.">
        <title>Identification of Barkor as a mammalian autophagy-specific factor for Beclin 1 and class III phosphatidylinositol 3-kinase.</title>
        <authorList>
            <person name="Sun Q."/>
            <person name="Fan W."/>
            <person name="Chen K."/>
            <person name="Ding X."/>
            <person name="Chen S."/>
            <person name="Zhong Q."/>
        </authorList>
    </citation>
    <scope>FUNCTION</scope>
    <scope>INTERACTION WITH BECN1</scope>
    <scope>SUBCELLULAR LOCATION</scope>
</reference>
<reference key="9">
    <citation type="journal article" date="2009" name="Mol. Cell. Proteomics">
        <title>Large-scale proteomics analysis of the human kinome.</title>
        <authorList>
            <person name="Oppermann F.S."/>
            <person name="Gnad F."/>
            <person name="Olsen J.V."/>
            <person name="Hornberger R."/>
            <person name="Greff Z."/>
            <person name="Keri G."/>
            <person name="Mann M."/>
            <person name="Daub H."/>
        </authorList>
    </citation>
    <scope>PHOSPHORYLATION [LARGE SCALE ANALYSIS] AT SER-29; SER-416 AND THR-429</scope>
    <scope>IDENTIFICATION BY MASS SPECTROMETRY [LARGE SCALE ANALYSIS]</scope>
</reference>
<reference key="10">
    <citation type="journal article" date="2009" name="Nat. Cell Biol.">
        <title>Two Beclin 1-binding proteins, Atg14L and Rubicon, reciprocally regulate autophagy at different stages.</title>
        <authorList>
            <person name="Matsunaga K."/>
            <person name="Saitoh T."/>
            <person name="Tabata K."/>
            <person name="Omori H."/>
            <person name="Satoh T."/>
            <person name="Kurotori N."/>
            <person name="Maejima I."/>
            <person name="Shirahama-Noda K."/>
            <person name="Ichimura T."/>
            <person name="Isobe T."/>
            <person name="Akira S."/>
            <person name="Noda T."/>
            <person name="Yoshimori T."/>
        </authorList>
    </citation>
    <scope>FUNCTION</scope>
    <scope>INTERACTION WITH BECN1; PIK3C3 AND PIK3R4</scope>
    <scope>SUBCELLULAR LOCATION</scope>
</reference>
<reference key="11">
    <citation type="journal article" date="2010" name="J. Cell Biol.">
        <title>Autophagy requires endoplasmic reticulum targeting of the PI3-kinase complex via Atg14L.</title>
        <authorList>
            <person name="Matsunaga K."/>
            <person name="Morita E."/>
            <person name="Saitoh T."/>
            <person name="Akira S."/>
            <person name="Ktistakis N.T."/>
            <person name="Izumi T."/>
            <person name="Noda T."/>
            <person name="Yoshimori T."/>
        </authorList>
    </citation>
    <scope>FUNCTION</scope>
    <scope>SUBCELLULAR LOCATION</scope>
    <scope>DOMAIN</scope>
    <scope>MUTAGENESIS OF CYS-43; CYS-46; CYS-55 AND CYS-58</scope>
</reference>
<reference key="12">
    <citation type="journal article" date="2012" name="Nat. Commun.">
        <title>Imperfect interface of Beclin1 coiled-coil domain regulates homodimer and heterodimer formation with Atg14L and UVRAG.</title>
        <authorList>
            <person name="Li X."/>
            <person name="He L."/>
            <person name="Che K.H."/>
            <person name="Funderburk S.F."/>
            <person name="Pan L."/>
            <person name="Pan N."/>
            <person name="Zhang M."/>
            <person name="Yue Z."/>
            <person name="Zhao Y."/>
        </authorList>
    </citation>
    <scope>INTERACTION WITH BECN1</scope>
    <scope>SUBCELLULAR LOCATION</scope>
</reference>
<reference key="13">
    <citation type="journal article" date="2013" name="Cell">
        <title>Beclin 2 functions in autophagy, degradation of G protein-coupled receptors, and metabolism.</title>
        <authorList>
            <person name="He C."/>
            <person name="Wei Y."/>
            <person name="Sun K."/>
            <person name="Li B."/>
            <person name="Dong X."/>
            <person name="Zou Z."/>
            <person name="Liu Y."/>
            <person name="Kinch L.N."/>
            <person name="Khan S."/>
            <person name="Sinha S."/>
            <person name="Xavier R.J."/>
            <person name="Grishin N.V."/>
            <person name="Xiao G."/>
            <person name="Eskelinen E.L."/>
            <person name="Scherer P.E."/>
            <person name="Whistler J.L."/>
            <person name="Levine B."/>
        </authorList>
    </citation>
    <scope>INTERACTION WITH BECN2</scope>
</reference>
<reference key="14">
    <citation type="journal article" date="2013" name="Mol. Cell. Biol.">
        <title>Role of membrane association and Atg14-dependent phosphorylation in beclin-1-mediated autophagy.</title>
        <authorList>
            <person name="Fogel A.I."/>
            <person name="Dlouhy B.J."/>
            <person name="Wang C."/>
            <person name="Ryu S.W."/>
            <person name="Neutzner A."/>
            <person name="Hasson S.A."/>
            <person name="Sideris D.P."/>
            <person name="Abeliovich H."/>
            <person name="Youle R.J."/>
        </authorList>
    </citation>
    <scope>FUNCTION</scope>
    <scope>INTERACTION WITH BECN1</scope>
</reference>
<reference key="15">
    <citation type="journal article" date="2014" name="Elife">
        <title>Architecture and dynamics of the autophagic phosphatidylinositol 3-kinase complex.</title>
        <authorList>
            <person name="Baskaran S."/>
            <person name="Carlson L.A."/>
            <person name="Stjepanovic G."/>
            <person name="Young L.N."/>
            <person name="Kim do J."/>
            <person name="Grob P."/>
            <person name="Stanley R.E."/>
            <person name="Nogales E."/>
            <person name="Hurley J.H."/>
        </authorList>
    </citation>
    <scope>RECONSTITUTION OF THE PI3K COMPLEX I</scope>
    <scope>ELECTRON MICROSCOPY OF THE PI3K COMPLEX I</scope>
</reference>
<reference key="16">
    <citation type="journal article" date="2015" name="Nature">
        <title>ATG14 promotes membrane tethering and fusion of autophagosomes to endolysosomes.</title>
        <authorList>
            <person name="Diao J."/>
            <person name="Liu R."/>
            <person name="Rong Y."/>
            <person name="Zhao M."/>
            <person name="Zhang J."/>
            <person name="Lai Y."/>
            <person name="Zhou Q."/>
            <person name="Wilz L.M."/>
            <person name="Li J."/>
            <person name="Vivona S."/>
            <person name="Pfuetzner R.A."/>
            <person name="Brunger A.T."/>
            <person name="Zhong Q."/>
        </authorList>
    </citation>
    <scope>INTERACTION WITH BECN1; STX17 AND SNAP29</scope>
    <scope>SUBCELLULAR LOCATION</scope>
    <scope>FUNCTION</scope>
    <scope>DOMAIN</scope>
    <scope>SUBUNIT</scope>
    <scope>MUTAGENESIS OF CYS-43; CYS-46; CYS-55 AND CYS-58</scope>
</reference>
<reference key="17">
    <citation type="journal article" date="2017" name="Protein Sci.">
        <title>BECN2 interacts with ATG14 through a metastable coiled-coil to mediate autophagy.</title>
        <authorList>
            <person name="Su M."/>
            <person name="Li Y."/>
            <person name="Wyborny S."/>
            <person name="Neau D."/>
            <person name="Chakravarthy S."/>
            <person name="Levine B."/>
            <person name="Colbert C.L."/>
            <person name="Sinha S.C."/>
        </authorList>
    </citation>
    <scope>INTERACTION WITH BECN2</scope>
</reference>
<reference key="18">
    <citation type="journal article" date="2019" name="Mol. Cell">
        <title>The ER-Localized Transmembrane Protein TMEM39A/SUSR2 Regulates Autophagy by Controlling the Trafficking of the PtdIns(4)P Phosphatase SAC1.</title>
        <authorList>
            <person name="Miao G."/>
            <person name="Zhang Y."/>
            <person name="Chen D."/>
            <person name="Zhang H."/>
        </authorList>
    </citation>
    <scope>INTERACTION WITH PIK3C3 AND BECN1</scope>
</reference>
<reference key="19">
    <citation type="journal article" date="2019" name="Sci. Adv.">
        <title>Autophagy induction in atrophic muscle cells requires ULK1 activation by TRIM32 through unanchored K63-linked polyubiquitin chains.</title>
        <authorList>
            <person name="Di Rienzo M."/>
            <person name="Antonioli M."/>
            <person name="Fusco C."/>
            <person name="Liu Y."/>
            <person name="Mari M."/>
            <person name="Orhon I."/>
            <person name="Refolo G."/>
            <person name="Germani F."/>
            <person name="Corazzari M."/>
            <person name="Romagnoli A."/>
            <person name="Ciccosanti F."/>
            <person name="Mandriani B."/>
            <person name="Pellico M.T."/>
            <person name="De La Torre R."/>
            <person name="Ding H."/>
            <person name="Dentice M."/>
            <person name="Neri M."/>
            <person name="Ferlini A."/>
            <person name="Reggiori F."/>
            <person name="Kulesz-Martin M."/>
            <person name="Piacentini M."/>
            <person name="Merla G."/>
            <person name="Fimia G.M."/>
        </authorList>
    </citation>
    <scope>PHOSPHORYLATION AT SER-29</scope>
</reference>
<reference key="20">
    <citation type="journal article" date="2020" name="Nat. Immunol.">
        <title>STEEP mediates STING ER exit and activation of signaling.</title>
        <authorList>
            <person name="Zhang B.C."/>
            <person name="Nandakumar R."/>
            <person name="Reinert L.S."/>
            <person name="Huang J."/>
            <person name="Laustsen A."/>
            <person name="Gao Z.L."/>
            <person name="Sun C.L."/>
            <person name="Jensen S.B."/>
            <person name="Troldborg A."/>
            <person name="Assil S."/>
            <person name="Berthelsen M.F."/>
            <person name="Scavenius C."/>
            <person name="Zhang Y."/>
            <person name="Windross S.J."/>
            <person name="Olagnier D."/>
            <person name="Prabakaran T."/>
            <person name="Bodda C."/>
            <person name="Narita R."/>
            <person name="Cai Y."/>
            <person name="Zhang C.G."/>
            <person name="Stenmark H."/>
            <person name="Doucet C.M."/>
            <person name="Noda T."/>
            <person name="Guo Z."/>
            <person name="Goldbach-Mansky R."/>
            <person name="Hartmann R."/>
            <person name="Chen Z.J."/>
            <person name="Enghild J.J."/>
            <person name="Bak R.O."/>
            <person name="Thomsen M.K."/>
            <person name="Paludan S.R."/>
        </authorList>
    </citation>
    <scope>INTERACTION WITH STEEP1</scope>
</reference>
<reference key="21">
    <citation type="journal article" date="2020" name="Nat. Immunol.">
        <authorList>
            <person name="Zhang B.C."/>
            <person name="Nandakumar R."/>
            <person name="Reinert L.S."/>
            <person name="Huang J."/>
            <person name="Laustsen A."/>
            <person name="Gao Z.L."/>
            <person name="Sun C.L."/>
            <person name="Jensen S.B."/>
            <person name="Troldborg A."/>
            <person name="Assil S."/>
            <person name="Berthelsen M.F."/>
            <person name="Scavenius C."/>
            <person name="Zhang Y."/>
            <person name="Windross S.J."/>
            <person name="Olagnier D."/>
            <person name="Prabakaran T."/>
            <person name="Bodda C."/>
            <person name="Narita R."/>
            <person name="Cai Y."/>
            <person name="Zhang C.G."/>
            <person name="Stenmark H."/>
            <person name="Doucet C.M."/>
            <person name="Noda T."/>
            <person name="Guo Z."/>
            <person name="Goldbach-Mansky R."/>
            <person name="Hartmann R."/>
            <person name="Chen Z.J."/>
            <person name="Enghild J.J."/>
            <person name="Bak R.O."/>
            <person name="Thomsen M.K."/>
            <person name="Paludan S.R."/>
        </authorList>
    </citation>
    <scope>ERRATUM OF PUBMED:32690950</scope>
</reference>
<reference key="22">
    <citation type="journal article" date="2023" name="Cell Rep.">
        <title>MARCH7-mediated ubiquitination decreases the solubility of ATG14 to inhibit autophagy.</title>
        <authorList>
            <person name="Shi X."/>
            <person name="Wu W."/>
            <person name="Feng Z."/>
            <person name="Fan P."/>
            <person name="Shi R."/>
            <person name="Zhang X."/>
        </authorList>
    </citation>
    <scope>FUNCTION</scope>
    <scope>SUBCELLULAR LOCATION</scope>
    <scope>INTERACTION WITH STX17</scope>
    <scope>UBIQUITINATION</scope>
</reference>
<accession>Q6ZNE5</accession>
<accession>A6NJE4</accession>
<accession>A8K9U5</accession>
<accession>B7ZWP5</accession>
<accession>O94920</accession>
<accession>Q32MK7</accession>
<accession>Q32MK8</accession>
<keyword id="KW-0002">3D-structure</keyword>
<keyword id="KW-0025">Alternative splicing</keyword>
<keyword id="KW-0072">Autophagy</keyword>
<keyword id="KW-0175">Coiled coil</keyword>
<keyword id="KW-0963">Cytoplasm</keyword>
<keyword id="KW-0968">Cytoplasmic vesicle</keyword>
<keyword id="KW-0256">Endoplasmic reticulum</keyword>
<keyword id="KW-0472">Membrane</keyword>
<keyword id="KW-0597">Phosphoprotein</keyword>
<keyword id="KW-1267">Proteomics identification</keyword>
<keyword id="KW-1185">Reference proteome</keyword>
<keyword id="KW-0832">Ubl conjugation</keyword>
<evidence type="ECO:0000250" key="1"/>
<evidence type="ECO:0000250" key="2">
    <source>
        <dbReference type="UniProtKB" id="Q8CDJ3"/>
    </source>
</evidence>
<evidence type="ECO:0000255" key="3"/>
<evidence type="ECO:0000256" key="4">
    <source>
        <dbReference type="SAM" id="MobiDB-lite"/>
    </source>
</evidence>
<evidence type="ECO:0000269" key="5">
    <source>
    </source>
</evidence>
<evidence type="ECO:0000269" key="6">
    <source>
    </source>
</evidence>
<evidence type="ECO:0000269" key="7">
    <source>
    </source>
</evidence>
<evidence type="ECO:0000269" key="8">
    <source>
    </source>
</evidence>
<evidence type="ECO:0000269" key="9">
    <source>
    </source>
</evidence>
<evidence type="ECO:0000269" key="10">
    <source>
    </source>
</evidence>
<evidence type="ECO:0000269" key="11">
    <source>
    </source>
</evidence>
<evidence type="ECO:0000269" key="12">
    <source>
    </source>
</evidence>
<evidence type="ECO:0000269" key="13">
    <source>
    </source>
</evidence>
<evidence type="ECO:0000269" key="14">
    <source>
    </source>
</evidence>
<evidence type="ECO:0000269" key="15">
    <source>
    </source>
</evidence>
<evidence type="ECO:0000269" key="16">
    <source>
    </source>
</evidence>
<evidence type="ECO:0000269" key="17">
    <source>
    </source>
</evidence>
<evidence type="ECO:0000269" key="18">
    <source>
    </source>
</evidence>
<evidence type="ECO:0000303" key="19">
    <source>
    </source>
</evidence>
<evidence type="ECO:0000303" key="20">
    <source>
    </source>
</evidence>
<evidence type="ECO:0000303" key="21">
    <source>
    </source>
</evidence>
<evidence type="ECO:0000303" key="22">
    <source>
    </source>
</evidence>
<evidence type="ECO:0000305" key="23"/>
<evidence type="ECO:0007744" key="24">
    <source>
    </source>
</evidence>
<evidence type="ECO:0007744" key="25">
    <source>
    </source>
</evidence>
<evidence type="ECO:0007829" key="26">
    <source>
        <dbReference type="PDB" id="6HOL"/>
    </source>
</evidence>
<sequence>MASPSGKGARALEAPGCGPRPLARDLVDSVDDAEGLYVAVERCPLCNTTRRRLTCAKCVQSGDFVYFDGRDRERFIDKKERLSRLKSKQEEFQKEVLKAMEGKWITDQLRWKIMSCKMRIEQLKQTICKGNEEMEKNSEGLLKTKEKNQKLYSRAQRHQEKKEKIQRHNRKLGDLVEKKTIDLRSHYERLANLRRSHILELTSVIFPIEEVKTGVRDPADVSSESDSAMTSSTVSKLAEARRTTYLSGRWVCDDHNGDTSISITGPWISLPNNGDYSAYYSWVEEKKTTQGPDMEQSNPAYTISAALCYATQLVNILSHILDVNLPKKLCNSEFCGENLSKQKFTRAVKKLNANILYLCFSQHVNLDQLQPLHTLRNLMYLVSPSSEHLGRSGPFEVRADLEESMEFVDPGVAGESDESGDERVSDEETDLGTDWENLPSPRFCDIPSQSVEVSQSQSTQASPPIASSSAGGMISSAAASVTSWFKAYTGHR</sequence>
<proteinExistence type="evidence at protein level"/>
<name>BAKOR_HUMAN</name>
<comment type="function">
    <text evidence="2 5 6 7 8 10 13 18">Required for both basal and inducible autophagy. Determines the localization of the autophagy-specific PI3-kinase complex PI3KC3-C1 (PubMed:18843052, PubMed:19050071). Plays a role in autophagosome formation and MAP1LC3/LC3 conjugation to phosphatidylethanolamine (PubMed:19270696, PubMed:20713597). Promotes BECN1 translocation from the trans-Golgi network to autophagosomes (PubMed:20713597). Enhances PIK3C3 activity in a BECN1-dependent manner. Essential for the autophagy-dependent phosphorylation of BECN1 (PubMed:23878393). Stimulates the phosphorylation of BECN1, but suppresses the phosphorylation PIK3C3 by AMPK (PubMed:23878393). Binds to STX17-SNAP29 binary t-SNARE complex on autophagosomes and primes it for VAMP8 interaction to promote autophagosome-endolysosome fusion (PubMed:25686604, PubMed:37632749). Modulates the hepatic lipid metabolism (By similarity).</text>
</comment>
<comment type="subunit">
    <text evidence="2 5 6 7 9 10 11 12 13 14 16 17 18 23">Forms homooligomers; homo-oligomerization is essential for the roles in membrane tethering and enhancement of SNARE-mediated fusion (PubMed:25686604). Component of the PI3K (PI3KC3/PI3K-III/class III phosphatidylinositol 3-kinase) complex I (PI3KC3-C1) in which the core composed of the catalytic subunit PIK3C3, the regulatory subunit PIK3R4 and BECN1 is associated with ATG14 (PubMed:18843052, PubMed:19050071, PubMed:19270696, PubMed:22314358, PubMed:23878393). PI3KC3-C1 displays a V-shaped architecture with PIK3R4 serving as a bridge between PIK3C3 and the ATG14:BECN1 subcomplex (PubMed:25490155). PI3KC3-C1 can associate with further regulatory subunits. Interacts with PIK3CB (By similarity). Interacts (via coiled-coil domain) with BECN2 (via coiled-coil domain); this interaction is tighter than BECN2 self-association (PubMed:23954414, PubMed:28218432). Interacts with the STX17-SNAP29 binary t-SNARE complex (PubMed:25686604, PubMed:37632749). Interacts with NRBF2 (By similarity). Interacts with PIK3C3 and BECN1; this interaction is increased in the absence of TMEM39A (PubMed:31806350). Interacts with STEEP1; the interaction is required for trafficking of STING1 from the endoplasmic reticulum (PubMed:32690950). Interacts with ARMC3 (via ARM domains) (By similarity).</text>
</comment>
<comment type="interaction">
    <interactant intactId="EBI-2690371">
        <id>Q6ZNE5</id>
    </interactant>
    <interactant intactId="EBI-949378">
        <id>Q14457</id>
        <label>BECN1</label>
    </interactant>
    <organismsDiffer>false</organismsDiffer>
    <experiments>51</experiments>
</comment>
<comment type="interaction">
    <interactant intactId="EBI-2690371">
        <id>Q6ZNE5</id>
    </interactant>
    <interactant intactId="EBI-5661036">
        <id>A1L4K1</id>
        <label>FSD2</label>
    </interactant>
    <organismsDiffer>false</organismsDiffer>
    <experiments>3</experiments>
</comment>
<comment type="interaction">
    <interactant intactId="EBI-2690371">
        <id>Q6ZNE5</id>
    </interactant>
    <interactant intactId="EBI-1104552">
        <id>Q9NYP9</id>
        <label>MIS18A</label>
    </interactant>
    <organismsDiffer>false</organismsDiffer>
    <experiments>4</experiments>
</comment>
<comment type="interaction">
    <interactant intactId="EBI-2690371">
        <id>Q6ZNE5</id>
    </interactant>
    <interactant intactId="EBI-1056470">
        <id>Q8NEB9</id>
        <label>PIK3C3</label>
    </interactant>
    <organismsDiffer>false</organismsDiffer>
    <experiments>31</experiments>
</comment>
<comment type="subcellular location">
    <subcellularLocation>
        <location evidence="6 18">Cytoplasm</location>
    </subcellularLocation>
    <subcellularLocation>
        <location evidence="7 8">Endoplasmic reticulum membrane</location>
        <topology evidence="23">Peripheral membrane protein</topology>
    </subcellularLocation>
    <subcellularLocation>
        <location evidence="5 6 7 9">Preautophagosomal structure membrane</location>
        <topology evidence="23">Peripheral membrane protein</topology>
    </subcellularLocation>
    <subcellularLocation>
        <location evidence="7 13">Cytoplasmic vesicle</location>
        <location evidence="7 13">Autophagosome membrane</location>
        <topology evidence="23">Peripheral membrane protein</topology>
    </subcellularLocation>
    <text evidence="2">Cytosolic under nutrient-rich conditions (PubMed:19050071). Following autophagy stimuli, such as starvation or rapamycin induction, predominantly detected in cytoplasmic foci, identified as isolation membranes and autophagosomes (PubMed:19050071). Accumulates on highly curved PtdIns(3)P enriched autophagic membrane via its BATS domain to sense and maintain membrane curvature (By similarity). Also localizes to discrete punctae along the ciliary axoneme and to the base of the ciliary axoneme (By similarity).</text>
</comment>
<comment type="alternative products">
    <event type="alternative splicing"/>
    <isoform>
        <id>Q6ZNE5-1</id>
        <name>1</name>
        <sequence type="displayed"/>
    </isoform>
    <isoform>
        <id>Q6ZNE5-2</id>
        <name>2</name>
        <sequence type="described" ref="VSP_013931"/>
    </isoform>
</comment>
<comment type="domain">
    <text evidence="8">The coiled-coil domain is required for BECN1- and PIK3C3-binding and for autophagy.</text>
</comment>
<comment type="domain">
    <text evidence="8 13">The final 80 residues in the C-terminus define a minimum required region for autophagosome binding called BATS.</text>
</comment>
<comment type="domain">
    <text evidence="8">The N-terminal cysteine repeats are required for proper localization to the endoplasmic reticulum.</text>
</comment>
<comment type="PTM">
    <text evidence="18">Ubiquitinated via 'Lys-6', 'Lys-11' and 'Lys-63'-linked polyubiquitin chains on multiple lysines by MARCHF7, leading to ATG14 aggregation and loss of interaction with STX17.</text>
</comment>
<comment type="similarity">
    <text evidence="23">Belongs to the ATG14 family.</text>
</comment>
<comment type="sequence caution" evidence="23">
    <conflict type="erroneous initiation">
        <sequence resource="EMBL-CDS" id="BAA74854"/>
    </conflict>
    <text>Extended N-terminus.</text>
</comment>
<dbReference type="EMBL" id="AB020638">
    <property type="protein sequence ID" value="BAA74854.2"/>
    <property type="status" value="ALT_INIT"/>
    <property type="molecule type" value="mRNA"/>
</dbReference>
<dbReference type="EMBL" id="AK131251">
    <property type="protein sequence ID" value="BAD18430.1"/>
    <property type="molecule type" value="mRNA"/>
</dbReference>
<dbReference type="EMBL" id="AK292810">
    <property type="protein sequence ID" value="BAF85499.1"/>
    <property type="molecule type" value="mRNA"/>
</dbReference>
<dbReference type="EMBL" id="AL158801">
    <property type="status" value="NOT_ANNOTATED_CDS"/>
    <property type="molecule type" value="Genomic_DNA"/>
</dbReference>
<dbReference type="EMBL" id="CH471061">
    <property type="protein sequence ID" value="EAW80673.1"/>
    <property type="molecule type" value="Genomic_DNA"/>
</dbReference>
<dbReference type="EMBL" id="BC109089">
    <property type="protein sequence ID" value="AAI09090.1"/>
    <property type="molecule type" value="mRNA"/>
</dbReference>
<dbReference type="EMBL" id="BC109090">
    <property type="protein sequence ID" value="AAI09091.1"/>
    <property type="molecule type" value="mRNA"/>
</dbReference>
<dbReference type="EMBL" id="BR000826">
    <property type="protein sequence ID" value="FAA00433.1"/>
    <property type="molecule type" value="mRNA"/>
</dbReference>
<dbReference type="CCDS" id="CCDS32087.1">
    <molecule id="Q6ZNE5-1"/>
</dbReference>
<dbReference type="RefSeq" id="NP_055739.2">
    <molecule id="Q6ZNE5-1"/>
    <property type="nucleotide sequence ID" value="NM_014924.4"/>
</dbReference>
<dbReference type="RefSeq" id="XP_011534865.1">
    <molecule id="Q6ZNE5-2"/>
    <property type="nucleotide sequence ID" value="XM_011536563.3"/>
</dbReference>
<dbReference type="RefSeq" id="XP_054231553.1">
    <molecule id="Q6ZNE5-2"/>
    <property type="nucleotide sequence ID" value="XM_054375578.1"/>
</dbReference>
<dbReference type="PDB" id="6HOL">
    <property type="method" value="X-ray"/>
    <property type="resolution" value="1.40 A"/>
    <property type="chains" value="C/D=429-443"/>
</dbReference>
<dbReference type="PDB" id="8SOR">
    <property type="method" value="EM"/>
    <property type="resolution" value="3.96 A"/>
    <property type="chains" value="C=1-492"/>
</dbReference>
<dbReference type="PDB" id="9C82">
    <property type="method" value="EM"/>
    <property type="resolution" value="6.84 A"/>
    <property type="chains" value="C=1-492"/>
</dbReference>
<dbReference type="PDB" id="9MHF">
    <property type="method" value="EM"/>
    <property type="resolution" value="2.73 A"/>
    <property type="chains" value="C=1-492"/>
</dbReference>
<dbReference type="PDB" id="9MHG">
    <property type="method" value="EM"/>
    <property type="resolution" value="3.20 A"/>
    <property type="chains" value="C=1-492"/>
</dbReference>
<dbReference type="PDB" id="9MHH">
    <property type="method" value="EM"/>
    <property type="resolution" value="4.50 A"/>
    <property type="chains" value="C=1-492"/>
</dbReference>
<dbReference type="PDBsum" id="6HOL"/>
<dbReference type="PDBsum" id="8SOR"/>
<dbReference type="PDBsum" id="9C82"/>
<dbReference type="PDBsum" id="9MHF"/>
<dbReference type="PDBsum" id="9MHG"/>
<dbReference type="PDBsum" id="9MHH"/>
<dbReference type="EMDB" id="EMD-2846"/>
<dbReference type="EMDB" id="EMD-40669"/>
<dbReference type="EMDB" id="EMD-40738"/>
<dbReference type="EMDB" id="EMD-45297"/>
<dbReference type="EMDB" id="EMD-48276"/>
<dbReference type="EMDB" id="EMD-48277"/>
<dbReference type="EMDB" id="EMD-48278"/>
<dbReference type="SMR" id="Q6ZNE5"/>
<dbReference type="BioGRID" id="116531">
    <property type="interactions" value="71"/>
</dbReference>
<dbReference type="ComplexPortal" id="CPX-73">
    <property type="entry name" value="Phosphatidylinositol 3-kinase complex, class III, ATG14 variant"/>
</dbReference>
<dbReference type="CORUM" id="Q6ZNE5"/>
<dbReference type="DIP" id="DIP-48651N"/>
<dbReference type="FunCoup" id="Q6ZNE5">
    <property type="interactions" value="2074"/>
</dbReference>
<dbReference type="IntAct" id="Q6ZNE5">
    <property type="interactions" value="40"/>
</dbReference>
<dbReference type="MINT" id="Q6ZNE5"/>
<dbReference type="STRING" id="9606.ENSP00000247178"/>
<dbReference type="TCDB" id="9.A.15.2.1">
    <property type="family name" value="the autophagy-related phagophore-formation transporter (apt) family"/>
</dbReference>
<dbReference type="GlyGen" id="Q6ZNE5">
    <property type="glycosylation" value="1 site, 1 O-linked glycan (1 site)"/>
</dbReference>
<dbReference type="iPTMnet" id="Q6ZNE5"/>
<dbReference type="PhosphoSitePlus" id="Q6ZNE5"/>
<dbReference type="BioMuta" id="ATG14"/>
<dbReference type="DMDM" id="67461020"/>
<dbReference type="jPOST" id="Q6ZNE5"/>
<dbReference type="MassIVE" id="Q6ZNE5"/>
<dbReference type="PaxDb" id="9606-ENSP00000247178"/>
<dbReference type="PeptideAtlas" id="Q6ZNE5"/>
<dbReference type="ProteomicsDB" id="68016">
    <molecule id="Q6ZNE5-1"/>
</dbReference>
<dbReference type="ProteomicsDB" id="68017">
    <molecule id="Q6ZNE5-2"/>
</dbReference>
<dbReference type="Pumba" id="Q6ZNE5"/>
<dbReference type="Antibodypedia" id="24031">
    <property type="antibodies" value="214 antibodies from 32 providers"/>
</dbReference>
<dbReference type="DNASU" id="22863"/>
<dbReference type="Ensembl" id="ENST00000247178.6">
    <molecule id="Q6ZNE5-1"/>
    <property type="protein sequence ID" value="ENSP00000247178.5"/>
    <property type="gene ID" value="ENSG00000126775.9"/>
</dbReference>
<dbReference type="GeneID" id="22863"/>
<dbReference type="KEGG" id="hsa:22863"/>
<dbReference type="MANE-Select" id="ENST00000247178.6">
    <property type="protein sequence ID" value="ENSP00000247178.5"/>
    <property type="RefSeq nucleotide sequence ID" value="NM_014924.5"/>
    <property type="RefSeq protein sequence ID" value="NP_055739.2"/>
</dbReference>
<dbReference type="UCSC" id="uc001xbx.3">
    <molecule id="Q6ZNE5-1"/>
    <property type="organism name" value="human"/>
</dbReference>
<dbReference type="AGR" id="HGNC:19962"/>
<dbReference type="CTD" id="22863"/>
<dbReference type="DisGeNET" id="22863"/>
<dbReference type="GeneCards" id="ATG14"/>
<dbReference type="HGNC" id="HGNC:19962">
    <property type="gene designation" value="ATG14"/>
</dbReference>
<dbReference type="HPA" id="ENSG00000126775">
    <property type="expression patterns" value="Tissue enhanced (bone)"/>
</dbReference>
<dbReference type="MIM" id="613515">
    <property type="type" value="gene"/>
</dbReference>
<dbReference type="neXtProt" id="NX_Q6ZNE5"/>
<dbReference type="OpenTargets" id="ENSG00000126775"/>
<dbReference type="PharmGKB" id="PA165478560"/>
<dbReference type="VEuPathDB" id="HostDB:ENSG00000126775"/>
<dbReference type="eggNOG" id="KOG4398">
    <property type="taxonomic scope" value="Eukaryota"/>
</dbReference>
<dbReference type="GeneTree" id="ENSGT00390000011854"/>
<dbReference type="HOGENOM" id="CLU_046719_1_0_1"/>
<dbReference type="InParanoid" id="Q6ZNE5"/>
<dbReference type="OMA" id="LCYSEFC"/>
<dbReference type="OrthoDB" id="16772at2759"/>
<dbReference type="PAN-GO" id="Q6ZNE5">
    <property type="GO annotations" value="9 GO annotations based on evolutionary models"/>
</dbReference>
<dbReference type="PhylomeDB" id="Q6ZNE5"/>
<dbReference type="TreeFam" id="TF323392"/>
<dbReference type="BRENDA" id="2.7.1.137">
    <property type="organism ID" value="2681"/>
</dbReference>
<dbReference type="PathwayCommons" id="Q6ZNE5"/>
<dbReference type="Reactome" id="R-HSA-1632852">
    <property type="pathway name" value="Macroautophagy"/>
</dbReference>
<dbReference type="Reactome" id="R-HSA-9705671">
    <property type="pathway name" value="SARS-CoV-2 activates/modulates innate and adaptive immune responses"/>
</dbReference>
<dbReference type="Reactome" id="R-HSA-983170">
    <property type="pathway name" value="Antigen Presentation: Folding, assembly and peptide loading of class I MHC"/>
</dbReference>
<dbReference type="SignaLink" id="Q6ZNE5"/>
<dbReference type="SIGNOR" id="Q6ZNE5"/>
<dbReference type="BioGRID-ORCS" id="22863">
    <property type="hits" value="31 hits in 1164 CRISPR screens"/>
</dbReference>
<dbReference type="ChiTaRS" id="ATG14">
    <property type="organism name" value="human"/>
</dbReference>
<dbReference type="GenomeRNAi" id="22863"/>
<dbReference type="Pharos" id="Q6ZNE5">
    <property type="development level" value="Tbio"/>
</dbReference>
<dbReference type="PRO" id="PR:Q6ZNE5"/>
<dbReference type="Proteomes" id="UP000005640">
    <property type="component" value="Chromosome 14"/>
</dbReference>
<dbReference type="RNAct" id="Q6ZNE5">
    <property type="molecule type" value="protein"/>
</dbReference>
<dbReference type="Bgee" id="ENSG00000126775">
    <property type="expression patterns" value="Expressed in secondary oocyte and 205 other cell types or tissues"/>
</dbReference>
<dbReference type="GO" id="GO:0005776">
    <property type="term" value="C:autophagosome"/>
    <property type="evidence" value="ECO:0000314"/>
    <property type="project" value="UniProtKB"/>
</dbReference>
<dbReference type="GO" id="GO:0000421">
    <property type="term" value="C:autophagosome membrane"/>
    <property type="evidence" value="ECO:0007669"/>
    <property type="project" value="UniProtKB-SubCell"/>
</dbReference>
<dbReference type="GO" id="GO:0005930">
    <property type="term" value="C:axoneme"/>
    <property type="evidence" value="ECO:0000250"/>
    <property type="project" value="UniProtKB"/>
</dbReference>
<dbReference type="GO" id="GO:0005829">
    <property type="term" value="C:cytosol"/>
    <property type="evidence" value="ECO:0000304"/>
    <property type="project" value="Reactome"/>
</dbReference>
<dbReference type="GO" id="GO:0005789">
    <property type="term" value="C:endoplasmic reticulum membrane"/>
    <property type="evidence" value="ECO:0000304"/>
    <property type="project" value="Reactome"/>
</dbReference>
<dbReference type="GO" id="GO:0097629">
    <property type="term" value="C:extrinsic component of omegasome membrane"/>
    <property type="evidence" value="ECO:0000314"/>
    <property type="project" value="UniProtKB"/>
</dbReference>
<dbReference type="GO" id="GO:0097632">
    <property type="term" value="C:extrinsic component of phagophore assembly site membrane"/>
    <property type="evidence" value="ECO:0000314"/>
    <property type="project" value="UniProtKB"/>
</dbReference>
<dbReference type="GO" id="GO:0044233">
    <property type="term" value="C:mitochondria-associated endoplasmic reticulum membrane contact site"/>
    <property type="evidence" value="ECO:0007669"/>
    <property type="project" value="Ensembl"/>
</dbReference>
<dbReference type="GO" id="GO:0045335">
    <property type="term" value="C:phagocytic vesicle"/>
    <property type="evidence" value="ECO:0007669"/>
    <property type="project" value="Ensembl"/>
</dbReference>
<dbReference type="GO" id="GO:0000407">
    <property type="term" value="C:phagophore assembly site"/>
    <property type="evidence" value="ECO:0000314"/>
    <property type="project" value="UniProt"/>
</dbReference>
<dbReference type="GO" id="GO:0034045">
    <property type="term" value="C:phagophore assembly site membrane"/>
    <property type="evidence" value="ECO:0000314"/>
    <property type="project" value="UniProtKB"/>
</dbReference>
<dbReference type="GO" id="GO:0035032">
    <property type="term" value="C:phosphatidylinositol 3-kinase complex, class III"/>
    <property type="evidence" value="ECO:0000353"/>
    <property type="project" value="ComplexPortal"/>
</dbReference>
<dbReference type="GO" id="GO:0051020">
    <property type="term" value="F:GTPase binding"/>
    <property type="evidence" value="ECO:0000353"/>
    <property type="project" value="UniProtKB"/>
</dbReference>
<dbReference type="GO" id="GO:0141039">
    <property type="term" value="F:phosphatidylinositol 3-kinase inhibitor activity"/>
    <property type="evidence" value="ECO:0000314"/>
    <property type="project" value="GO_Central"/>
</dbReference>
<dbReference type="GO" id="GO:0035014">
    <property type="term" value="F:phosphatidylinositol 3-kinase regulator activity"/>
    <property type="evidence" value="ECO:0000318"/>
    <property type="project" value="GO_Central"/>
</dbReference>
<dbReference type="GO" id="GO:0043495">
    <property type="term" value="F:protein-membrane adaptor activity"/>
    <property type="evidence" value="ECO:0000314"/>
    <property type="project" value="UniProt"/>
</dbReference>
<dbReference type="GO" id="GO:0000045">
    <property type="term" value="P:autophagosome assembly"/>
    <property type="evidence" value="ECO:0000314"/>
    <property type="project" value="UniProt"/>
</dbReference>
<dbReference type="GO" id="GO:0097352">
    <property type="term" value="P:autophagosome maturation"/>
    <property type="evidence" value="ECO:0000314"/>
    <property type="project" value="ComplexPortal"/>
</dbReference>
<dbReference type="GO" id="GO:0016240">
    <property type="term" value="P:autophagosome membrane docking"/>
    <property type="evidence" value="ECO:0000314"/>
    <property type="project" value="GO_Central"/>
</dbReference>
<dbReference type="GO" id="GO:0042149">
    <property type="term" value="P:cellular response to glucose starvation"/>
    <property type="evidence" value="ECO:0000250"/>
    <property type="project" value="UniProtKB"/>
</dbReference>
<dbReference type="GO" id="GO:0009267">
    <property type="term" value="P:cellular response to starvation"/>
    <property type="evidence" value="ECO:0000315"/>
    <property type="project" value="ParkinsonsUK-UCL"/>
</dbReference>
<dbReference type="GO" id="GO:0051607">
    <property type="term" value="P:defense response to virus"/>
    <property type="evidence" value="ECO:0007669"/>
    <property type="project" value="Ensembl"/>
</dbReference>
<dbReference type="GO" id="GO:0045022">
    <property type="term" value="P:early endosome to late endosome transport"/>
    <property type="evidence" value="ECO:0000314"/>
    <property type="project" value="ComplexPortal"/>
</dbReference>
<dbReference type="GO" id="GO:0008333">
    <property type="term" value="P:endosome to lysosome transport"/>
    <property type="evidence" value="ECO:0000316"/>
    <property type="project" value="MGI"/>
</dbReference>
<dbReference type="GO" id="GO:0045087">
    <property type="term" value="P:innate immune response"/>
    <property type="evidence" value="ECO:0007669"/>
    <property type="project" value="Ensembl"/>
</dbReference>
<dbReference type="GO" id="GO:0016236">
    <property type="term" value="P:macroautophagy"/>
    <property type="evidence" value="ECO:0000315"/>
    <property type="project" value="ParkinsonsUK-UCL"/>
</dbReference>
<dbReference type="GO" id="GO:0000423">
    <property type="term" value="P:mitophagy"/>
    <property type="evidence" value="ECO:0000315"/>
    <property type="project" value="ParkinsonsUK-UCL"/>
</dbReference>
<dbReference type="GO" id="GO:0001933">
    <property type="term" value="P:negative regulation of protein phosphorylation"/>
    <property type="evidence" value="ECO:0000250"/>
    <property type="project" value="UniProtKB"/>
</dbReference>
<dbReference type="GO" id="GO:0043491">
    <property type="term" value="P:phosphatidylinositol 3-kinase/protein kinase B signal transduction"/>
    <property type="evidence" value="ECO:0000314"/>
    <property type="project" value="UniProtKB"/>
</dbReference>
<dbReference type="GO" id="GO:0036092">
    <property type="term" value="P:phosphatidylinositol-3-phosphate biosynthetic process"/>
    <property type="evidence" value="ECO:0000314"/>
    <property type="project" value="ComplexPortal"/>
</dbReference>
<dbReference type="GO" id="GO:0001934">
    <property type="term" value="P:positive regulation of protein phosphorylation"/>
    <property type="evidence" value="ECO:0000250"/>
    <property type="project" value="UniProtKB"/>
</dbReference>
<dbReference type="GO" id="GO:0010608">
    <property type="term" value="P:post-transcriptional regulation of gene expression"/>
    <property type="evidence" value="ECO:0000315"/>
    <property type="project" value="ParkinsonsUK-UCL"/>
</dbReference>
<dbReference type="GO" id="GO:0006622">
    <property type="term" value="P:protein targeting to lysosome"/>
    <property type="evidence" value="ECO:0000303"/>
    <property type="project" value="ComplexPortal"/>
</dbReference>
<dbReference type="GO" id="GO:0016241">
    <property type="term" value="P:regulation of macroautophagy"/>
    <property type="evidence" value="ECO:0000314"/>
    <property type="project" value="ComplexPortal"/>
</dbReference>
<dbReference type="GO" id="GO:0061635">
    <property type="term" value="P:regulation of protein complex stability"/>
    <property type="evidence" value="ECO:0000315"/>
    <property type="project" value="ParkinsonsUK-UCL"/>
</dbReference>
<dbReference type="GO" id="GO:0090207">
    <property type="term" value="P:regulation of triglyceride metabolic process"/>
    <property type="evidence" value="ECO:0007669"/>
    <property type="project" value="Ensembl"/>
</dbReference>
<dbReference type="GO" id="GO:0098780">
    <property type="term" value="P:response to mitochondrial depolarisation"/>
    <property type="evidence" value="ECO:0000315"/>
    <property type="project" value="BHF-UCL"/>
</dbReference>
<dbReference type="InterPro" id="IPR018791">
    <property type="entry name" value="UV_resistance/autophagy_Atg14"/>
</dbReference>
<dbReference type="PANTHER" id="PTHR13664">
    <property type="entry name" value="BECLIN 1-ASSOCIATED AUTOPHAGY-RELATED KEY REGULATOR"/>
    <property type="match status" value="1"/>
</dbReference>
<dbReference type="PANTHER" id="PTHR13664:SF0">
    <property type="entry name" value="BECLIN 1-ASSOCIATED AUTOPHAGY-RELATED KEY REGULATOR"/>
    <property type="match status" value="1"/>
</dbReference>
<dbReference type="Pfam" id="PF10186">
    <property type="entry name" value="ATG14"/>
    <property type="match status" value="1"/>
</dbReference>
<feature type="chain" id="PRO_0000050774" description="Beclin 1-associated autophagy-related key regulator">
    <location>
        <begin position="1"/>
        <end position="492"/>
    </location>
</feature>
<feature type="region of interest" description="Cysteine repeats">
    <location>
        <begin position="43"/>
        <end position="58"/>
    </location>
</feature>
<feature type="region of interest" description="Disordered" evidence="4">
    <location>
        <begin position="410"/>
        <end position="473"/>
    </location>
</feature>
<feature type="region of interest" description="BATS" evidence="1">
    <location>
        <begin position="413"/>
        <end position="492"/>
    </location>
</feature>
<feature type="coiled-coil region" evidence="3">
    <location>
        <begin position="71"/>
        <end position="180"/>
    </location>
</feature>
<feature type="compositionally biased region" description="Acidic residues" evidence="4">
    <location>
        <begin position="415"/>
        <end position="433"/>
    </location>
</feature>
<feature type="compositionally biased region" description="Low complexity" evidence="4">
    <location>
        <begin position="448"/>
        <end position="473"/>
    </location>
</feature>
<feature type="modified residue" description="Phosphoserine" evidence="15 24 25">
    <location>
        <position position="29"/>
    </location>
</feature>
<feature type="modified residue" description="Phosphoserine" evidence="25">
    <location>
        <position position="416"/>
    </location>
</feature>
<feature type="modified residue" description="Phosphothreonine" evidence="25">
    <location>
        <position position="429"/>
    </location>
</feature>
<feature type="splice variant" id="VSP_013931" description="In isoform 2." evidence="19">
    <location>
        <begin position="1"/>
        <end position="113"/>
    </location>
</feature>
<feature type="sequence variant" id="VAR_061240" description="In dbSNP:rs57295720.">
    <original>V</original>
    <variation>I</variation>
    <location>
        <position position="59"/>
    </location>
</feature>
<feature type="sequence variant" id="VAR_049514" description="In dbSNP:rs17675076.">
    <original>N</original>
    <variation>K</variation>
    <location>
        <position position="131"/>
    </location>
</feature>
<feature type="mutagenesis site" description="In Atg14L4C4A; fails to localize to the endoplasmic reticulum; when associated with A-46; A-55 and A-58." evidence="8 13">
    <original>C</original>
    <variation>A</variation>
    <location>
        <position position="43"/>
    </location>
</feature>
<feature type="mutagenesis site" description="In Atg14L4C4A; fails to localize to the endoplasmic reticulum; when associated with A-43; A-55 and A-58." evidence="8 13">
    <original>C</original>
    <variation>A</variation>
    <location>
        <position position="46"/>
    </location>
</feature>
<feature type="mutagenesis site" description="In Atg14L4C4A; fails to localize to the endoplasmic reticulum; when associated with A-43; A-46 and A-58." evidence="8 13">
    <original>C</original>
    <variation>A</variation>
    <location>
        <position position="55"/>
    </location>
</feature>
<feature type="mutagenesis site" description="In Atg14L4C4A; fails to localize to the endoplasmic reticulum; when associated with A-43; A-46 and A-55." evidence="8 13">
    <original>C</original>
    <variation>A</variation>
    <location>
        <position position="58"/>
    </location>
</feature>
<feature type="sequence conflict" description="In Ref. 5; AAI09090." evidence="23" ref="5">
    <original>N</original>
    <variation>S</variation>
    <location>
        <position position="256"/>
    </location>
</feature>
<feature type="strand" evidence="26">
    <location>
        <begin position="435"/>
        <end position="437"/>
    </location>
</feature>